<gene>
    <name evidence="1" type="primary">mutL</name>
    <name type="ordered locus">HEAR0406</name>
</gene>
<organism>
    <name type="scientific">Herminiimonas arsenicoxydans</name>
    <dbReference type="NCBI Taxonomy" id="204773"/>
    <lineage>
        <taxon>Bacteria</taxon>
        <taxon>Pseudomonadati</taxon>
        <taxon>Pseudomonadota</taxon>
        <taxon>Betaproteobacteria</taxon>
        <taxon>Burkholderiales</taxon>
        <taxon>Oxalobacteraceae</taxon>
        <taxon>Herminiimonas</taxon>
    </lineage>
</organism>
<sequence>MHASSPSVRPIQALSDQLISQIAAGEVVERPSAVVKELLENALDAGATHISVRLEQGGVKRIAITDNGRGIAPEQLPLALARHATSKINSLTELENVATLGFRGEALASIASVSQLTLTSRTADAAHAWEISGVQSIDQKSTVAPSSGTAGTTVDVLDLYFNTPARRKFLKTEQTEFGHCAEVVRRIALSRPDVAFSLTHNGKTIDHWAVNDIARRSAHILGNEFSAARLPLKETAGPLRLHGFIGLPTASKARGDAQYFYVNGRFVRDKLLMHAVRSAYQDVLHGDRYPSYVISLELDPALVDVNVHPSKIEVRFRDSRAVHQFVFHAVTRALAQTSATAFGAAPSPTPAPSSALPWLREQQQSTFAPQFNSPYGVAQSAANYGALFANGPASNDSNSAAPSLHTAGSHGATTLPDDEFPLGFALAQLHGIFILAQNTKGLVLVDMHAAHERILYEQLKHALDDNELQVQPLLIPITFYADGMEVGTTEDNQDILHALGFDIAALSPTTLAVRAVPALLKNADAQTLARDVLRDVREFGGSRVLLERRNELLGTLACHTAVRANRTLTVPEMNALLRQMEATERADQCNHGRPTWVQLGLSDLDKLFERGR</sequence>
<reference key="1">
    <citation type="journal article" date="2007" name="PLoS Genet.">
        <title>A tale of two oxidation states: bacterial colonization of arsenic-rich environments.</title>
        <authorList>
            <person name="Muller D."/>
            <person name="Medigue C."/>
            <person name="Koechler S."/>
            <person name="Barbe V."/>
            <person name="Barakat M."/>
            <person name="Talla E."/>
            <person name="Bonnefoy V."/>
            <person name="Krin E."/>
            <person name="Arsene-Ploetze F."/>
            <person name="Carapito C."/>
            <person name="Chandler M."/>
            <person name="Cournoyer B."/>
            <person name="Cruveiller S."/>
            <person name="Dossat C."/>
            <person name="Duval S."/>
            <person name="Heymann M."/>
            <person name="Leize E."/>
            <person name="Lieutaud A."/>
            <person name="Lievremont D."/>
            <person name="Makita Y."/>
            <person name="Mangenot S."/>
            <person name="Nitschke W."/>
            <person name="Ortet P."/>
            <person name="Perdrial N."/>
            <person name="Schoepp B."/>
            <person name="Siguier P."/>
            <person name="Simeonova D.D."/>
            <person name="Rouy Z."/>
            <person name="Segurens B."/>
            <person name="Turlin E."/>
            <person name="Vallenet D."/>
            <person name="van Dorsselaer A."/>
            <person name="Weiss S."/>
            <person name="Weissenbach J."/>
            <person name="Lett M.-C."/>
            <person name="Danchin A."/>
            <person name="Bertin P.N."/>
        </authorList>
    </citation>
    <scope>NUCLEOTIDE SEQUENCE [LARGE SCALE GENOMIC DNA]</scope>
    <source>
        <strain>ULPAs1</strain>
    </source>
</reference>
<name>MUTL_HERAR</name>
<proteinExistence type="inferred from homology"/>
<keyword id="KW-0227">DNA damage</keyword>
<keyword id="KW-0234">DNA repair</keyword>
<keyword id="KW-1185">Reference proteome</keyword>
<accession>A4G289</accession>
<comment type="function">
    <text evidence="1">This protein is involved in the repair of mismatches in DNA. It is required for dam-dependent methyl-directed DNA mismatch repair. May act as a 'molecular matchmaker', a protein that promotes the formation of a stable complex between two or more DNA-binding proteins in an ATP-dependent manner without itself being part of a final effector complex.</text>
</comment>
<comment type="similarity">
    <text evidence="1">Belongs to the DNA mismatch repair MutL/HexB family.</text>
</comment>
<feature type="chain" id="PRO_1000010024" description="DNA mismatch repair protein MutL">
    <location>
        <begin position="1"/>
        <end position="612"/>
    </location>
</feature>
<protein>
    <recommendedName>
        <fullName evidence="1">DNA mismatch repair protein MutL</fullName>
    </recommendedName>
</protein>
<evidence type="ECO:0000255" key="1">
    <source>
        <dbReference type="HAMAP-Rule" id="MF_00149"/>
    </source>
</evidence>
<dbReference type="EMBL" id="CU207211">
    <property type="protein sequence ID" value="CAL60626.1"/>
    <property type="molecule type" value="Genomic_DNA"/>
</dbReference>
<dbReference type="SMR" id="A4G289"/>
<dbReference type="STRING" id="204773.HEAR0406"/>
<dbReference type="KEGG" id="har:HEAR0406"/>
<dbReference type="eggNOG" id="COG0323">
    <property type="taxonomic scope" value="Bacteria"/>
</dbReference>
<dbReference type="HOGENOM" id="CLU_004131_4_2_4"/>
<dbReference type="OrthoDB" id="9763467at2"/>
<dbReference type="Proteomes" id="UP000006697">
    <property type="component" value="Chromosome"/>
</dbReference>
<dbReference type="GO" id="GO:0032300">
    <property type="term" value="C:mismatch repair complex"/>
    <property type="evidence" value="ECO:0007669"/>
    <property type="project" value="InterPro"/>
</dbReference>
<dbReference type="GO" id="GO:0005524">
    <property type="term" value="F:ATP binding"/>
    <property type="evidence" value="ECO:0007669"/>
    <property type="project" value="InterPro"/>
</dbReference>
<dbReference type="GO" id="GO:0016887">
    <property type="term" value="F:ATP hydrolysis activity"/>
    <property type="evidence" value="ECO:0007669"/>
    <property type="project" value="InterPro"/>
</dbReference>
<dbReference type="GO" id="GO:0140664">
    <property type="term" value="F:ATP-dependent DNA damage sensor activity"/>
    <property type="evidence" value="ECO:0007669"/>
    <property type="project" value="InterPro"/>
</dbReference>
<dbReference type="GO" id="GO:0030983">
    <property type="term" value="F:mismatched DNA binding"/>
    <property type="evidence" value="ECO:0007669"/>
    <property type="project" value="InterPro"/>
</dbReference>
<dbReference type="GO" id="GO:0006298">
    <property type="term" value="P:mismatch repair"/>
    <property type="evidence" value="ECO:0007669"/>
    <property type="project" value="UniProtKB-UniRule"/>
</dbReference>
<dbReference type="CDD" id="cd16926">
    <property type="entry name" value="HATPase_MutL-MLH-PMS-like"/>
    <property type="match status" value="1"/>
</dbReference>
<dbReference type="CDD" id="cd03482">
    <property type="entry name" value="MutL_Trans_MutL"/>
    <property type="match status" value="1"/>
</dbReference>
<dbReference type="FunFam" id="3.30.565.10:FF:000003">
    <property type="entry name" value="DNA mismatch repair endonuclease MutL"/>
    <property type="match status" value="1"/>
</dbReference>
<dbReference type="Gene3D" id="3.30.230.10">
    <property type="match status" value="1"/>
</dbReference>
<dbReference type="Gene3D" id="3.30.565.10">
    <property type="entry name" value="Histidine kinase-like ATPase, C-terminal domain"/>
    <property type="match status" value="1"/>
</dbReference>
<dbReference type="Gene3D" id="3.30.1540.20">
    <property type="entry name" value="MutL, C-terminal domain, dimerisation subdomain"/>
    <property type="match status" value="1"/>
</dbReference>
<dbReference type="Gene3D" id="3.30.1370.100">
    <property type="entry name" value="MutL, C-terminal domain, regulatory subdomain"/>
    <property type="match status" value="1"/>
</dbReference>
<dbReference type="HAMAP" id="MF_00149">
    <property type="entry name" value="DNA_mis_repair"/>
    <property type="match status" value="1"/>
</dbReference>
<dbReference type="InterPro" id="IPR014762">
    <property type="entry name" value="DNA_mismatch_repair_CS"/>
</dbReference>
<dbReference type="InterPro" id="IPR020667">
    <property type="entry name" value="DNA_mismatch_repair_MutL"/>
</dbReference>
<dbReference type="InterPro" id="IPR013507">
    <property type="entry name" value="DNA_mismatch_S5_2-like"/>
</dbReference>
<dbReference type="InterPro" id="IPR036890">
    <property type="entry name" value="HATPase_C_sf"/>
</dbReference>
<dbReference type="InterPro" id="IPR002099">
    <property type="entry name" value="MutL/Mlh/PMS"/>
</dbReference>
<dbReference type="InterPro" id="IPR038973">
    <property type="entry name" value="MutL/Mlh/Pms-like"/>
</dbReference>
<dbReference type="InterPro" id="IPR014790">
    <property type="entry name" value="MutL_C"/>
</dbReference>
<dbReference type="InterPro" id="IPR042120">
    <property type="entry name" value="MutL_C_dimsub"/>
</dbReference>
<dbReference type="InterPro" id="IPR042121">
    <property type="entry name" value="MutL_C_regsub"/>
</dbReference>
<dbReference type="InterPro" id="IPR037198">
    <property type="entry name" value="MutL_C_sf"/>
</dbReference>
<dbReference type="InterPro" id="IPR020568">
    <property type="entry name" value="Ribosomal_Su5_D2-typ_SF"/>
</dbReference>
<dbReference type="InterPro" id="IPR014721">
    <property type="entry name" value="Ribsml_uS5_D2-typ_fold_subgr"/>
</dbReference>
<dbReference type="NCBIfam" id="TIGR00585">
    <property type="entry name" value="mutl"/>
    <property type="match status" value="1"/>
</dbReference>
<dbReference type="PANTHER" id="PTHR10073">
    <property type="entry name" value="DNA MISMATCH REPAIR PROTEIN MLH, PMS, MUTL"/>
    <property type="match status" value="1"/>
</dbReference>
<dbReference type="PANTHER" id="PTHR10073:SF12">
    <property type="entry name" value="DNA MISMATCH REPAIR PROTEIN MLH1"/>
    <property type="match status" value="1"/>
</dbReference>
<dbReference type="Pfam" id="PF01119">
    <property type="entry name" value="DNA_mis_repair"/>
    <property type="match status" value="1"/>
</dbReference>
<dbReference type="Pfam" id="PF13589">
    <property type="entry name" value="HATPase_c_3"/>
    <property type="match status" value="1"/>
</dbReference>
<dbReference type="Pfam" id="PF08676">
    <property type="entry name" value="MutL_C"/>
    <property type="match status" value="1"/>
</dbReference>
<dbReference type="SMART" id="SM01340">
    <property type="entry name" value="DNA_mis_repair"/>
    <property type="match status" value="1"/>
</dbReference>
<dbReference type="SMART" id="SM00853">
    <property type="entry name" value="MutL_C"/>
    <property type="match status" value="1"/>
</dbReference>
<dbReference type="SUPFAM" id="SSF55874">
    <property type="entry name" value="ATPase domain of HSP90 chaperone/DNA topoisomerase II/histidine kinase"/>
    <property type="match status" value="1"/>
</dbReference>
<dbReference type="SUPFAM" id="SSF118116">
    <property type="entry name" value="DNA mismatch repair protein MutL"/>
    <property type="match status" value="1"/>
</dbReference>
<dbReference type="SUPFAM" id="SSF54211">
    <property type="entry name" value="Ribosomal protein S5 domain 2-like"/>
    <property type="match status" value="1"/>
</dbReference>
<dbReference type="PROSITE" id="PS00058">
    <property type="entry name" value="DNA_MISMATCH_REPAIR_1"/>
    <property type="match status" value="1"/>
</dbReference>